<sequence length="327" mass="36793">MTGHEDRVWSVAWSPNGFVLASCGGDKTIRIWGKEGDKWICKTILEDGHQRTIRSLGWSPCGTFLASASFDATTCIWDQKSGEFECNATLEGHENEVKSVDWSVSGSLLATCGRDKSVWIWEVQEDDEYECASVIHSHTQDVKKVVWHPTKEILASCSYDDTIKLYKEDEDDWSCCDTLEGHESTVWSISFDGSGDRIVSCSDDKTVRIWKSYPPGNQEGVVVSGKHTKWKCVCVLSGYHDRTIYDVHWSKVSGLIATASGDDCIRIFKEDTNSDRNQPSFQLVATQRKAHSMDVNSICWHPKDENILATCSDDGTVKLWRFTPAEE</sequence>
<gene>
    <name type="ORF">v1g226592</name>
</gene>
<comment type="function">
    <text evidence="1">Essential component of the cytosolic iron-sulfur (Fe/S) protein assembly machinery. Required for the maturation of extramitochondrial Fe/S proteins.</text>
</comment>
<comment type="similarity">
    <text evidence="1">Belongs to the WD repeat CIA1 family.</text>
</comment>
<reference key="1">
    <citation type="journal article" date="2007" name="Science">
        <title>Sea anemone genome reveals ancestral eumetazoan gene repertoire and genomic organization.</title>
        <authorList>
            <person name="Putnam N.H."/>
            <person name="Srivastava M."/>
            <person name="Hellsten U."/>
            <person name="Dirks B."/>
            <person name="Chapman J."/>
            <person name="Salamov A."/>
            <person name="Terry A."/>
            <person name="Shapiro H."/>
            <person name="Lindquist E."/>
            <person name="Kapitonov V.V."/>
            <person name="Jurka J."/>
            <person name="Genikhovich G."/>
            <person name="Grigoriev I.V."/>
            <person name="Lucas S.M."/>
            <person name="Steele R.E."/>
            <person name="Finnerty J.R."/>
            <person name="Technau U."/>
            <person name="Martindale M.Q."/>
            <person name="Rokhsar D.S."/>
        </authorList>
    </citation>
    <scope>NUCLEOTIDE SEQUENCE [LARGE SCALE GENOMIC DNA]</scope>
    <source>
        <strain>CH2 X CH6</strain>
    </source>
</reference>
<accession>A7RWD2</accession>
<dbReference type="EMBL" id="DS469546">
    <property type="protein sequence ID" value="EDO44295.1"/>
    <property type="molecule type" value="Genomic_DNA"/>
</dbReference>
<dbReference type="RefSeq" id="XP_001636358.1">
    <property type="nucleotide sequence ID" value="XM_001636308.1"/>
</dbReference>
<dbReference type="SMR" id="A7RWD2"/>
<dbReference type="STRING" id="45351.A7RWD2"/>
<dbReference type="EnsemblMetazoa" id="EDO44295">
    <property type="protein sequence ID" value="EDO44295"/>
    <property type="gene ID" value="NEMVEDRAFT_v1g226592"/>
</dbReference>
<dbReference type="eggNOG" id="KOG0645">
    <property type="taxonomic scope" value="Eukaryota"/>
</dbReference>
<dbReference type="HOGENOM" id="CLU_000288_57_8_1"/>
<dbReference type="InParanoid" id="A7RWD2"/>
<dbReference type="OMA" id="IREIRWS"/>
<dbReference type="OrthoDB" id="284782at2759"/>
<dbReference type="PhylomeDB" id="A7RWD2"/>
<dbReference type="Proteomes" id="UP000001593">
    <property type="component" value="Unassembled WGS sequence"/>
</dbReference>
<dbReference type="GO" id="GO:0097361">
    <property type="term" value="C:cytosolic [4Fe-4S] assembly targeting complex"/>
    <property type="evidence" value="ECO:0000318"/>
    <property type="project" value="GO_Central"/>
</dbReference>
<dbReference type="GO" id="GO:0016226">
    <property type="term" value="P:iron-sulfur cluster assembly"/>
    <property type="evidence" value="ECO:0000318"/>
    <property type="project" value="GO_Central"/>
</dbReference>
<dbReference type="GO" id="GO:0051604">
    <property type="term" value="P:protein maturation"/>
    <property type="evidence" value="ECO:0000250"/>
    <property type="project" value="UniProtKB"/>
</dbReference>
<dbReference type="CDD" id="cd00200">
    <property type="entry name" value="WD40"/>
    <property type="match status" value="1"/>
</dbReference>
<dbReference type="FunFam" id="2.130.10.10:FF:000136">
    <property type="entry name" value="Probable cytosolic iron-sulfur protein assembly protein CIAO1"/>
    <property type="match status" value="1"/>
</dbReference>
<dbReference type="Gene3D" id="2.130.10.10">
    <property type="entry name" value="YVTN repeat-like/Quinoprotein amine dehydrogenase"/>
    <property type="match status" value="1"/>
</dbReference>
<dbReference type="HAMAP" id="MF_03037">
    <property type="entry name" value="ciao1"/>
    <property type="match status" value="1"/>
</dbReference>
<dbReference type="InterPro" id="IPR028608">
    <property type="entry name" value="CIAO1/Cia1"/>
</dbReference>
<dbReference type="InterPro" id="IPR020472">
    <property type="entry name" value="G-protein_beta_WD-40_rep"/>
</dbReference>
<dbReference type="InterPro" id="IPR015943">
    <property type="entry name" value="WD40/YVTN_repeat-like_dom_sf"/>
</dbReference>
<dbReference type="InterPro" id="IPR019775">
    <property type="entry name" value="WD40_repeat_CS"/>
</dbReference>
<dbReference type="InterPro" id="IPR036322">
    <property type="entry name" value="WD40_repeat_dom_sf"/>
</dbReference>
<dbReference type="InterPro" id="IPR001680">
    <property type="entry name" value="WD40_rpt"/>
</dbReference>
<dbReference type="PANTHER" id="PTHR19920:SF0">
    <property type="entry name" value="CYTOSOLIC IRON-SULFUR PROTEIN ASSEMBLY PROTEIN CIAO1-RELATED"/>
    <property type="match status" value="1"/>
</dbReference>
<dbReference type="PANTHER" id="PTHR19920">
    <property type="entry name" value="WD40 PROTEIN CIAO1"/>
    <property type="match status" value="1"/>
</dbReference>
<dbReference type="Pfam" id="PF00400">
    <property type="entry name" value="WD40"/>
    <property type="match status" value="7"/>
</dbReference>
<dbReference type="PRINTS" id="PR00320">
    <property type="entry name" value="GPROTEINBRPT"/>
</dbReference>
<dbReference type="SMART" id="SM00320">
    <property type="entry name" value="WD40"/>
    <property type="match status" value="7"/>
</dbReference>
<dbReference type="SUPFAM" id="SSF50978">
    <property type="entry name" value="WD40 repeat-like"/>
    <property type="match status" value="1"/>
</dbReference>
<dbReference type="PROSITE" id="PS00678">
    <property type="entry name" value="WD_REPEATS_1"/>
    <property type="match status" value="1"/>
</dbReference>
<dbReference type="PROSITE" id="PS50082">
    <property type="entry name" value="WD_REPEATS_2"/>
    <property type="match status" value="6"/>
</dbReference>
<dbReference type="PROSITE" id="PS50294">
    <property type="entry name" value="WD_REPEATS_REGION"/>
    <property type="match status" value="1"/>
</dbReference>
<name>CIAO1_NEMVE</name>
<feature type="chain" id="PRO_0000382496" description="Probable cytosolic iron-sulfur protein assembly protein CIAO1 homolog">
    <location>
        <begin position="1"/>
        <end position="327"/>
    </location>
</feature>
<feature type="repeat" description="WD 1">
    <location>
        <begin position="3"/>
        <end position="42"/>
    </location>
</feature>
<feature type="repeat" description="WD 2">
    <location>
        <begin position="48"/>
        <end position="87"/>
    </location>
</feature>
<feature type="repeat" description="WD 3">
    <location>
        <begin position="92"/>
        <end position="131"/>
    </location>
</feature>
<feature type="repeat" description="WD 4">
    <location>
        <begin position="137"/>
        <end position="176"/>
    </location>
</feature>
<feature type="repeat" description="WD 5">
    <location>
        <begin position="181"/>
        <end position="220"/>
    </location>
</feature>
<feature type="repeat" description="WD 6">
    <location>
        <begin position="239"/>
        <end position="278"/>
    </location>
</feature>
<feature type="repeat" description="WD 7">
    <location>
        <begin position="290"/>
        <end position="327"/>
    </location>
</feature>
<keyword id="KW-1185">Reference proteome</keyword>
<keyword id="KW-0677">Repeat</keyword>
<keyword id="KW-0853">WD repeat</keyword>
<protein>
    <recommendedName>
        <fullName evidence="1">Probable cytosolic iron-sulfur protein assembly protein CIAO1 homolog</fullName>
    </recommendedName>
</protein>
<proteinExistence type="inferred from homology"/>
<evidence type="ECO:0000255" key="1">
    <source>
        <dbReference type="HAMAP-Rule" id="MF_03037"/>
    </source>
</evidence>
<organism>
    <name type="scientific">Nematostella vectensis</name>
    <name type="common">Starlet sea anemone</name>
    <dbReference type="NCBI Taxonomy" id="45351"/>
    <lineage>
        <taxon>Eukaryota</taxon>
        <taxon>Metazoa</taxon>
        <taxon>Cnidaria</taxon>
        <taxon>Anthozoa</taxon>
        <taxon>Hexacorallia</taxon>
        <taxon>Actiniaria</taxon>
        <taxon>Edwardsiidae</taxon>
        <taxon>Nematostella</taxon>
    </lineage>
</organism>